<proteinExistence type="evidence at protein level"/>
<feature type="chain" id="PRO_0000448496" description="L-tyrosine decarboxylase">
    <location>
        <begin position="1"/>
        <end position="620"/>
    </location>
</feature>
<feature type="active site" description="Proton donor" evidence="1">
    <location>
        <position position="420"/>
    </location>
</feature>
<feature type="binding site" description="in other chain" evidence="1">
    <location>
        <begin position="158"/>
        <end position="159"/>
    </location>
    <ligand>
        <name>pyridoxal 5'-phosphate</name>
        <dbReference type="ChEBI" id="CHEBI:597326"/>
        <note>ligand shared between dimeric partners</note>
    </ligand>
</feature>
<feature type="binding site" description="in other chain" evidence="1">
    <location>
        <position position="298"/>
    </location>
    <ligand>
        <name>pyridoxal 5'-phosphate</name>
        <dbReference type="ChEBI" id="CHEBI:597326"/>
        <note>ligand shared between dimeric partners</note>
    </ligand>
</feature>
<feature type="binding site" description="in other chain" evidence="1">
    <location>
        <begin position="389"/>
        <end position="391"/>
    </location>
    <ligand>
        <name>pyridoxal 5'-phosphate</name>
        <dbReference type="ChEBI" id="CHEBI:597326"/>
        <note>ligand shared between dimeric partners</note>
    </ligand>
</feature>
<feature type="binding site" evidence="1">
    <location>
        <position position="440"/>
    </location>
    <ligand>
        <name>pyridoxal 5'-phosphate</name>
        <dbReference type="ChEBI" id="CHEBI:597326"/>
        <note>ligand shared between dimeric partners</note>
    </ligand>
</feature>
<feature type="modified residue" description="N6-(pyridoxal phosphate)lysine" evidence="1">
    <location>
        <position position="392"/>
    </location>
</feature>
<feature type="helix" evidence="10">
    <location>
        <begin position="13"/>
        <end position="15"/>
    </location>
</feature>
<feature type="helix" evidence="10">
    <location>
        <begin position="25"/>
        <end position="44"/>
    </location>
</feature>
<feature type="helix" evidence="10">
    <location>
        <begin position="56"/>
        <end position="60"/>
    </location>
</feature>
<feature type="helix" evidence="10">
    <location>
        <begin position="62"/>
        <end position="85"/>
    </location>
</feature>
<feature type="strand" evidence="10">
    <location>
        <begin position="91"/>
        <end position="99"/>
    </location>
</feature>
<feature type="helix" evidence="10">
    <location>
        <begin position="105"/>
        <end position="115"/>
    </location>
</feature>
<feature type="helix" evidence="10">
    <location>
        <begin position="124"/>
        <end position="126"/>
    </location>
</feature>
<feature type="helix" evidence="10">
    <location>
        <begin position="128"/>
        <end position="144"/>
    </location>
</feature>
<feature type="strand" evidence="10">
    <location>
        <begin position="151"/>
        <end position="156"/>
    </location>
</feature>
<feature type="helix" evidence="10">
    <location>
        <begin position="158"/>
        <end position="182"/>
    </location>
</feature>
<feature type="helix" evidence="10">
    <location>
        <begin position="184"/>
        <end position="187"/>
    </location>
</feature>
<feature type="helix" evidence="10">
    <location>
        <begin position="192"/>
        <end position="195"/>
    </location>
</feature>
<feature type="helix" evidence="10">
    <location>
        <begin position="200"/>
        <end position="209"/>
    </location>
</feature>
<feature type="helix" evidence="10">
    <location>
        <begin position="211"/>
        <end position="213"/>
    </location>
</feature>
<feature type="helix" evidence="10">
    <location>
        <begin position="214"/>
        <end position="219"/>
    </location>
</feature>
<feature type="helix" evidence="10">
    <location>
        <begin position="222"/>
        <end position="224"/>
    </location>
</feature>
<feature type="turn" evidence="10">
    <location>
        <begin position="228"/>
        <end position="231"/>
    </location>
</feature>
<feature type="strand" evidence="10">
    <location>
        <begin position="233"/>
        <end position="237"/>
    </location>
</feature>
<feature type="helix" evidence="10">
    <location>
        <begin position="238"/>
        <end position="240"/>
    </location>
</feature>
<feature type="helix" evidence="10">
    <location>
        <begin position="241"/>
        <end position="251"/>
    </location>
</feature>
<feature type="helix" evidence="10">
    <location>
        <begin position="255"/>
        <end position="257"/>
    </location>
</feature>
<feature type="strand" evidence="10">
    <location>
        <begin position="258"/>
        <end position="261"/>
    </location>
</feature>
<feature type="strand" evidence="10">
    <location>
        <begin position="267"/>
        <end position="269"/>
    </location>
</feature>
<feature type="helix" evidence="10">
    <location>
        <begin position="271"/>
        <end position="283"/>
    </location>
</feature>
<feature type="strand" evidence="10">
    <location>
        <begin position="288"/>
        <end position="296"/>
    </location>
</feature>
<feature type="turn" evidence="10">
    <location>
        <begin position="298"/>
        <end position="300"/>
    </location>
</feature>
<feature type="helix" evidence="10">
    <location>
        <begin position="306"/>
        <end position="318"/>
    </location>
</feature>
<feature type="strand" evidence="10">
    <location>
        <begin position="324"/>
        <end position="329"/>
    </location>
</feature>
<feature type="turn" evidence="10">
    <location>
        <begin position="330"/>
        <end position="332"/>
    </location>
</feature>
<feature type="helix" evidence="10">
    <location>
        <begin position="333"/>
        <end position="339"/>
    </location>
</feature>
<feature type="helix" evidence="10">
    <location>
        <begin position="349"/>
        <end position="351"/>
    </location>
</feature>
<feature type="helix" evidence="10">
    <location>
        <begin position="352"/>
        <end position="358"/>
    </location>
</feature>
<feature type="helix" evidence="10">
    <location>
        <begin position="371"/>
        <end position="379"/>
    </location>
</feature>
<feature type="helix" evidence="10">
    <location>
        <begin position="380"/>
        <end position="382"/>
    </location>
</feature>
<feature type="strand" evidence="10">
    <location>
        <begin position="383"/>
        <end position="388"/>
    </location>
</feature>
<feature type="turn" evidence="10">
    <location>
        <begin position="390"/>
        <end position="394"/>
    </location>
</feature>
<feature type="strand" evidence="10">
    <location>
        <begin position="401"/>
        <end position="407"/>
    </location>
</feature>
<feature type="helix" evidence="10">
    <location>
        <begin position="408"/>
        <end position="413"/>
    </location>
</feature>
<feature type="helix" evidence="10">
    <location>
        <begin position="432"/>
        <end position="435"/>
    </location>
</feature>
<feature type="strand" evidence="10">
    <location>
        <begin position="436"/>
        <end position="438"/>
    </location>
</feature>
<feature type="helix" evidence="10">
    <location>
        <begin position="443"/>
        <end position="455"/>
    </location>
</feature>
<feature type="turn" evidence="10">
    <location>
        <begin position="460"/>
        <end position="462"/>
    </location>
</feature>
<feature type="helix" evidence="10">
    <location>
        <begin position="463"/>
        <end position="482"/>
    </location>
</feature>
<feature type="strand" evidence="10">
    <location>
        <begin position="485"/>
        <end position="488"/>
    </location>
</feature>
<feature type="strand" evidence="10">
    <location>
        <begin position="491"/>
        <end position="499"/>
    </location>
</feature>
<feature type="strand" evidence="10">
    <location>
        <begin position="502"/>
        <end position="512"/>
    </location>
</feature>
<feature type="helix" evidence="10">
    <location>
        <begin position="518"/>
        <end position="531"/>
    </location>
</feature>
<feature type="strand" evidence="12">
    <location>
        <begin position="533"/>
        <end position="537"/>
    </location>
</feature>
<feature type="helix" evidence="10">
    <location>
        <begin position="539"/>
        <end position="541"/>
    </location>
</feature>
<feature type="strand" evidence="10">
    <location>
        <begin position="545"/>
        <end position="552"/>
    </location>
</feature>
<feature type="helix" evidence="10">
    <location>
        <begin position="553"/>
        <end position="556"/>
    </location>
</feature>
<feature type="turn" evidence="10">
    <location>
        <begin position="557"/>
        <end position="560"/>
    </location>
</feature>
<feature type="helix" evidence="10">
    <location>
        <begin position="561"/>
        <end position="566"/>
    </location>
</feature>
<feature type="helix" evidence="10">
    <location>
        <begin position="571"/>
        <end position="577"/>
    </location>
</feature>
<feature type="strand" evidence="10">
    <location>
        <begin position="579"/>
        <end position="586"/>
    </location>
</feature>
<feature type="strand" evidence="11">
    <location>
        <begin position="590"/>
        <end position="594"/>
    </location>
</feature>
<feature type="helix" evidence="10">
    <location>
        <begin position="595"/>
        <end position="617"/>
    </location>
</feature>
<name>TYRDC_ENTFA</name>
<reference key="1">
    <citation type="journal article" date="2003" name="Science">
        <title>Role of mobile DNA in the evolution of vancomycin-resistant Enterococcus faecalis.</title>
        <authorList>
            <person name="Paulsen I.T."/>
            <person name="Banerjei L."/>
            <person name="Myers G.S.A."/>
            <person name="Nelson K.E."/>
            <person name="Seshadri R."/>
            <person name="Read T.D."/>
            <person name="Fouts D.E."/>
            <person name="Eisen J.A."/>
            <person name="Gill S.R."/>
            <person name="Heidelberg J.F."/>
            <person name="Tettelin H."/>
            <person name="Dodson R.J."/>
            <person name="Umayam L.A."/>
            <person name="Brinkac L.M."/>
            <person name="Beanan M.J."/>
            <person name="Daugherty S.C."/>
            <person name="DeBoy R.T."/>
            <person name="Durkin S.A."/>
            <person name="Kolonay J.F."/>
            <person name="Madupu R."/>
            <person name="Nelson W.C."/>
            <person name="Vamathevan J.J."/>
            <person name="Tran B."/>
            <person name="Upton J."/>
            <person name="Hansen T."/>
            <person name="Shetty J."/>
            <person name="Khouri H.M."/>
            <person name="Utterback T.R."/>
            <person name="Radune D."/>
            <person name="Ketchum K.A."/>
            <person name="Dougherty B.A."/>
            <person name="Fraser C.M."/>
        </authorList>
    </citation>
    <scope>NUCLEOTIDE SEQUENCE [LARGE SCALE GENOMIC DNA]</scope>
    <source>
        <strain>ATCC 700802 / V583</strain>
    </source>
</reference>
<reference key="2">
    <citation type="journal article" date="2015" name="Appl. Microbiol. Biotechnol.">
        <title>Tyramine biosynthesis is transcriptionally induced at low pH and improves the fitness of Enterococcus faecalis in acidic environments.</title>
        <authorList>
            <person name="Perez M."/>
            <person name="Calles-Enriquez M."/>
            <person name="Nes I."/>
            <person name="Martin M.C."/>
            <person name="Fernandez M."/>
            <person name="Ladero V."/>
            <person name="Alvarez M.A."/>
        </authorList>
    </citation>
    <scope>FUNCTION</scope>
    <scope>DISRUPTION PHENOTYPE</scope>
    <scope>INDUCTION</scope>
    <scope>PATHWAY</scope>
    <source>
        <strain>ATCC 700802 / V583</strain>
    </source>
</reference>
<reference key="3">
    <citation type="journal article" date="2019" name="Nat. Commun.">
        <title>Gut bacterial tyrosine decarboxylases restrict levels of levodopa in the treatment of Parkinson's disease.</title>
        <authorList>
            <person name="van Kessel S.P."/>
            <person name="Frye A.K."/>
            <person name="El-Gendy A.O."/>
            <person name="Castejon M."/>
            <person name="Keshavarzian A."/>
            <person name="van Dijk G."/>
            <person name="El Aidy S."/>
        </authorList>
    </citation>
    <scope>FUNCTION</scope>
    <scope>CATALYTIC ACTIVITY</scope>
    <scope>BIOPHYSICOCHEMICAL PROPERTIES</scope>
    <scope>ACTIVITY REGULATION</scope>
    <source>
        <strain>ATCC 700802 / V583</strain>
    </source>
</reference>
<accession>Q838D6</accession>
<organism>
    <name type="scientific">Enterococcus faecalis (strain ATCC 700802 / V583)</name>
    <dbReference type="NCBI Taxonomy" id="226185"/>
    <lineage>
        <taxon>Bacteria</taxon>
        <taxon>Bacillati</taxon>
        <taxon>Bacillota</taxon>
        <taxon>Bacilli</taxon>
        <taxon>Lactobacillales</taxon>
        <taxon>Enterococcaceae</taxon>
        <taxon>Enterococcus</taxon>
    </lineage>
</organism>
<evidence type="ECO:0000250" key="1">
    <source>
        <dbReference type="UniProtKB" id="J7GQ11"/>
    </source>
</evidence>
<evidence type="ECO:0000269" key="2">
    <source>
    </source>
</evidence>
<evidence type="ECO:0000269" key="3">
    <source>
    </source>
</evidence>
<evidence type="ECO:0000303" key="4">
    <source>
    </source>
</evidence>
<evidence type="ECO:0000303" key="5">
    <source>
    </source>
</evidence>
<evidence type="ECO:0000305" key="6"/>
<evidence type="ECO:0000305" key="7">
    <source>
    </source>
</evidence>
<evidence type="ECO:0000305" key="8">
    <source>
    </source>
</evidence>
<evidence type="ECO:0000312" key="9">
    <source>
        <dbReference type="EMBL" id="AAO80459.1"/>
    </source>
</evidence>
<evidence type="ECO:0007829" key="10">
    <source>
        <dbReference type="PDB" id="7CWX"/>
    </source>
</evidence>
<evidence type="ECO:0007829" key="11">
    <source>
        <dbReference type="PDB" id="7CWY"/>
    </source>
</evidence>
<evidence type="ECO:0007829" key="12">
    <source>
        <dbReference type="PDB" id="7CX1"/>
    </source>
</evidence>
<dbReference type="EC" id="4.1.1.25" evidence="3"/>
<dbReference type="EC" id="4.1.1.-" evidence="3"/>
<dbReference type="EMBL" id="AE016830">
    <property type="protein sequence ID" value="AAO80459.1"/>
    <property type="status" value="ALT_INIT"/>
    <property type="molecule type" value="Genomic_DNA"/>
</dbReference>
<dbReference type="RefSeq" id="NP_814388.1">
    <property type="nucleotide sequence ID" value="NC_004668.1"/>
</dbReference>
<dbReference type="RefSeq" id="WP_002355450.1">
    <property type="nucleotide sequence ID" value="NZ_KE136527.1"/>
</dbReference>
<dbReference type="PDB" id="7CWX">
    <property type="method" value="X-ray"/>
    <property type="resolution" value="2.15 A"/>
    <property type="chains" value="A/B/C=1-620"/>
</dbReference>
<dbReference type="PDB" id="7CWY">
    <property type="method" value="X-ray"/>
    <property type="resolution" value="2.59 A"/>
    <property type="chains" value="A/B/C=1-620"/>
</dbReference>
<dbReference type="PDB" id="7CWZ">
    <property type="method" value="X-ray"/>
    <property type="resolution" value="2.97 A"/>
    <property type="chains" value="A/B/C=1-620"/>
</dbReference>
<dbReference type="PDB" id="7CX0">
    <property type="method" value="X-ray"/>
    <property type="resolution" value="2.66 A"/>
    <property type="chains" value="A/B/C=1-620"/>
</dbReference>
<dbReference type="PDB" id="7CX1">
    <property type="method" value="X-ray"/>
    <property type="resolution" value="2.54 A"/>
    <property type="chains" value="A/B/C=1-620"/>
</dbReference>
<dbReference type="PDBsum" id="7CWX"/>
<dbReference type="PDBsum" id="7CWY"/>
<dbReference type="PDBsum" id="7CWZ"/>
<dbReference type="PDBsum" id="7CX0"/>
<dbReference type="PDBsum" id="7CX1"/>
<dbReference type="SMR" id="Q838D6"/>
<dbReference type="STRING" id="226185.EF_0634"/>
<dbReference type="EnsemblBacteria" id="AAO80459">
    <property type="protein sequence ID" value="AAO80459"/>
    <property type="gene ID" value="EF_0634"/>
</dbReference>
<dbReference type="GeneID" id="60892923"/>
<dbReference type="KEGG" id="efa:EF0634"/>
<dbReference type="PATRIC" id="fig|226185.9.peg.582"/>
<dbReference type="eggNOG" id="COG0076">
    <property type="taxonomic scope" value="Bacteria"/>
</dbReference>
<dbReference type="HOGENOM" id="CLU_005446_0_1_9"/>
<dbReference type="BRENDA" id="4.1.1.25">
    <property type="organism ID" value="2095"/>
</dbReference>
<dbReference type="SABIO-RK" id="Q838D6"/>
<dbReference type="Proteomes" id="UP000001415">
    <property type="component" value="Chromosome"/>
</dbReference>
<dbReference type="GO" id="GO:0036468">
    <property type="term" value="F:L-dopa decarboxylase activity"/>
    <property type="evidence" value="ECO:0000314"/>
    <property type="project" value="UniProtKB"/>
</dbReference>
<dbReference type="GO" id="GO:0030170">
    <property type="term" value="F:pyridoxal phosphate binding"/>
    <property type="evidence" value="ECO:0007669"/>
    <property type="project" value="InterPro"/>
</dbReference>
<dbReference type="GO" id="GO:0004837">
    <property type="term" value="F:tyrosine decarboxylase activity"/>
    <property type="evidence" value="ECO:0000314"/>
    <property type="project" value="UniProtKB"/>
</dbReference>
<dbReference type="GO" id="GO:1903184">
    <property type="term" value="P:L-dopa metabolic process"/>
    <property type="evidence" value="ECO:0000314"/>
    <property type="project" value="UniProtKB"/>
</dbReference>
<dbReference type="Gene3D" id="3.40.640.10">
    <property type="entry name" value="Type I PLP-dependent aspartate aminotransferase-like (Major domain)"/>
    <property type="match status" value="1"/>
</dbReference>
<dbReference type="InterPro" id="IPR050477">
    <property type="entry name" value="GrpII_AminoAcid_Decarb"/>
</dbReference>
<dbReference type="InterPro" id="IPR002129">
    <property type="entry name" value="PyrdxlP-dep_de-COase"/>
</dbReference>
<dbReference type="InterPro" id="IPR015424">
    <property type="entry name" value="PyrdxlP-dep_Trfase"/>
</dbReference>
<dbReference type="InterPro" id="IPR015421">
    <property type="entry name" value="PyrdxlP-dep_Trfase_major"/>
</dbReference>
<dbReference type="InterPro" id="IPR049373">
    <property type="entry name" value="TyrDC_C"/>
</dbReference>
<dbReference type="InterPro" id="IPR022397">
    <property type="entry name" value="Tyrosine_deCO2ase_bac"/>
</dbReference>
<dbReference type="NCBIfam" id="TIGR03811">
    <property type="entry name" value="tyr_de_CO2_Ent"/>
    <property type="match status" value="1"/>
</dbReference>
<dbReference type="PANTHER" id="PTHR42735">
    <property type="match status" value="1"/>
</dbReference>
<dbReference type="PANTHER" id="PTHR42735:SF4">
    <property type="entry name" value="PYRIDOXAL PHOSPHATE-DEPENDENT DECARBOXYLASE FAMILY PROTEIN"/>
    <property type="match status" value="1"/>
</dbReference>
<dbReference type="Pfam" id="PF00282">
    <property type="entry name" value="Pyridoxal_deC"/>
    <property type="match status" value="1"/>
</dbReference>
<dbReference type="Pfam" id="PF21391">
    <property type="entry name" value="tyr_de_CO2_C"/>
    <property type="match status" value="1"/>
</dbReference>
<dbReference type="SUPFAM" id="SSF53383">
    <property type="entry name" value="PLP-dependent transferases"/>
    <property type="match status" value="1"/>
</dbReference>
<sequence>MKNEKLAKGEMNLNALFIGDKAENGQLYKDLLIDLVDEHLGWRQNYMPQDMPVISSQERTSESYEKTVNHMKDVLNEISSRMRTHSVPWHTAGRYWGHMNSETLMPSLLAYNFAMLWNGNNVAYESSPATSQMEEEVGHEFAHLMSYKNGWGHIVADGSLANLEGLWYARNIKSLPFAMKEVKPELVAGKSDWELLNMPTKEIMDLLESAEDEIDEIKAHSARSGKHLQAIGKWLVPQTKHYSWLKAADIIGIGLDQVIPVPVDHNYRMDINELEKIVRGLAEEQIPVLGVVGVVGSTEEGAVDSIDKIIALRDELMKDGIYYYVHVDAAYGGYGRAIFLDEDNNFIPYEDLQDVHEEYGVFKEKKEHISREVYDAYKAIELAESVTIDPHKMGYIPYSAGGIVIQDIRMRDVISYFATYVFEKGADIPALLGAYILEGSKAGATAASVWAAHHVLPLNVAGYGKLIGASIEGSHHFYNFLNDLTFKVGDKEIEVHTLTHPDFNMVDYVFKEKGNDDLVAMNKLNHDVYDYASYVKGNIYNNEFITSHTDFAIPDYGNSPLKFVNSLGFSDEEWNRAGKVTVLRAAVMTPYMNDKEEFDVYAPKIQAALQEKLEQIYDVK</sequence>
<keyword id="KW-0002">3D-structure</keyword>
<keyword id="KW-0175">Coiled coil</keyword>
<keyword id="KW-0210">Decarboxylase</keyword>
<keyword id="KW-0456">Lyase</keyword>
<keyword id="KW-0663">Pyridoxal phosphate</keyword>
<keyword id="KW-1185">Reference proteome</keyword>
<keyword id="KW-0346">Stress response</keyword>
<comment type="function">
    <text evidence="2 3">Catalyzes the decarboxylation of L-tyrosine to produce tyramine (PubMed:30659181). Plays a role in acid resistance since tyramine production via tyrosine decarboxylation appears to provide a cytosolic pH maintenance mechanism that helps the bacterium cope with acid stress such as that encountered in gastrointestinal tract (GIT) environments. Therefore, may contribute to the colonization of the human GIT by E.faecalis (PubMed:25529314).</text>
</comment>
<comment type="function">
    <text evidence="3">Also involved in drug metabolism, being able to catalyze decarboxylation of levodopa (L-dopa) to dopamine. In gut microbiota this enzyme is in fact exclusively responsible for the decarboxylation of levodopa, and thus reduces in situ levels of levodopa in the treatment of Parkinson's disease. It was shown that abundance of bacterial tyrosine decarboxylase in the proximal small intestine - the primary site of levodopa absorption - contributes to interindividual variation in drug efficacy and can explain the requirement for an increased dosage regimen of levodopa treatment in Parkinson's disease patients.</text>
</comment>
<comment type="catalytic activity">
    <reaction evidence="3 7">
        <text>L-tyrosine + H(+) = tyramine + CO2</text>
        <dbReference type="Rhea" id="RHEA:14345"/>
        <dbReference type="ChEBI" id="CHEBI:15378"/>
        <dbReference type="ChEBI" id="CHEBI:16526"/>
        <dbReference type="ChEBI" id="CHEBI:58315"/>
        <dbReference type="ChEBI" id="CHEBI:327995"/>
        <dbReference type="EC" id="4.1.1.25"/>
    </reaction>
    <physiologicalReaction direction="left-to-right" evidence="2">
        <dbReference type="Rhea" id="RHEA:14346"/>
    </physiologicalReaction>
</comment>
<comment type="catalytic activity">
    <reaction evidence="3">
        <text>L-dopa + H(+) = dopamine + CO2</text>
        <dbReference type="Rhea" id="RHEA:12272"/>
        <dbReference type="ChEBI" id="CHEBI:15378"/>
        <dbReference type="ChEBI" id="CHEBI:16526"/>
        <dbReference type="ChEBI" id="CHEBI:57504"/>
        <dbReference type="ChEBI" id="CHEBI:59905"/>
    </reaction>
    <physiologicalReaction direction="left-to-right" evidence="8">
        <dbReference type="Rhea" id="RHEA:12273"/>
    </physiologicalReaction>
</comment>
<comment type="cofactor">
    <cofactor evidence="8">
        <name>pyridoxal 5'-phosphate</name>
        <dbReference type="ChEBI" id="CHEBI:597326"/>
    </cofactor>
</comment>
<comment type="activity regulation">
    <text evidence="3">Levodopa decarboxylation is not inhibited by carbidopa, benserazide, and methyldopa, that are three human L-dopa decarboxylase inhibitors.</text>
</comment>
<comment type="biophysicochemical properties">
    <kinetics>
        <KM evidence="3">0.6 mM for L-tyrosine (at pH 5.0)</KM>
        <KM evidence="3">3 mM for L-dopa (at pH 5.0)</KM>
        <Vmax evidence="3">69.6 umol/min/mg enzyme for the decarboxylation of L-tyrosine (at pH 5.0)</Vmax>
        <Vmax evidence="3">35.3 umol/min/mg enzyme for the decarboxylation of L-dopa (at pH 5.0)</Vmax>
        <text evidence="3">kcat is 6963 min(-1) for the decarboxylation of L-tyrosine. kcat is 3531 min(-1) for the decarboxylation of L-dopa (at pH 5.0).</text>
    </kinetics>
</comment>
<comment type="pathway">
    <text evidence="2">Amino-acid metabolism.</text>
</comment>
<comment type="subunit">
    <text evidence="1">Homodimer.</text>
</comment>
<comment type="induction">
    <text evidence="2">Up-regulated by tyrosine and acidic pH. Makes part of an operon together with tyrP and nhaC-2.</text>
</comment>
<comment type="disruption phenotype">
    <text evidence="2">Cells lacking the tdc cluster (tyrS, tdc/tdcA, tyrP and nhaC-2) lose the ability to produce tyramine, and show reduced viability under acidic pHs in the presence of tyrosine.</text>
</comment>
<comment type="similarity">
    <text evidence="6">Belongs to the group II decarboxylase family. Tyrosine decarboxylase subfamily.</text>
</comment>
<comment type="sequence caution" evidence="6">
    <conflict type="erroneous initiation">
        <sequence resource="EMBL-CDS" id="AAO80459"/>
    </conflict>
    <text>Truncated N-terminus.</text>
</comment>
<gene>
    <name evidence="5" type="primary">tdc</name>
    <name evidence="4" type="synonym">tdcA</name>
    <name evidence="9" type="ordered locus">EF_0634</name>
</gene>
<protein>
    <recommendedName>
        <fullName evidence="5">L-tyrosine decarboxylase</fullName>
        <shortName evidence="5">TDC</shortName>
        <ecNumber evidence="3">4.1.1.25</ecNumber>
    </recommendedName>
    <alternativeName>
        <fullName evidence="8">Levodopa decarboxylase</fullName>
        <shortName evidence="8">L-dopa decarboxylase</shortName>
        <ecNumber evidence="3">4.1.1.-</ecNumber>
    </alternativeName>
</protein>